<reference key="1">
    <citation type="journal article" date="1993" name="Eur. J. Biochem.">
        <title>Evolution of pro-protamine P2 genes in primates.</title>
        <authorList>
            <person name="Retief J.D."/>
            <person name="Dixon G.H."/>
        </authorList>
    </citation>
    <scope>NUCLEOTIDE SEQUENCE [GENOMIC DNA]</scope>
</reference>
<reference key="2">
    <citation type="journal article" date="1993" name="Eur. J. Biochem.">
        <authorList>
            <person name="Retief J.D."/>
            <person name="Dixon G.H."/>
        </authorList>
    </citation>
    <scope>ERRATUM OF PUBMED:8513810</scope>
</reference>
<reference key="3">
    <citation type="journal article" date="2000" name="Nature">
        <title>Rapid evolution of male reproductive genes in the descent of man.</title>
        <authorList>
            <person name="Wyckoff G.J."/>
            <person name="Wang W."/>
            <person name="Wu C.-I."/>
        </authorList>
    </citation>
    <scope>NUCLEOTIDE SEQUENCE [GENOMIC DNA]</scope>
</reference>
<dbReference type="EMBL" id="X72968">
    <property type="protein sequence ID" value="CAA51474.1"/>
    <property type="molecule type" value="Genomic_DNA"/>
</dbReference>
<dbReference type="EMBL" id="AF215711">
    <property type="protein sequence ID" value="AAF34630.1"/>
    <property type="molecule type" value="Genomic_DNA"/>
</dbReference>
<dbReference type="PIR" id="S33331">
    <property type="entry name" value="S33331"/>
</dbReference>
<dbReference type="RefSeq" id="NP_001009084.1">
    <property type="nucleotide sequence ID" value="NM_001009084.1"/>
</dbReference>
<dbReference type="FunCoup" id="P35300">
    <property type="interactions" value="10"/>
</dbReference>
<dbReference type="STRING" id="9598.ENSPTRP00000013259"/>
<dbReference type="PaxDb" id="9598-ENSPTRP00000013259"/>
<dbReference type="GeneID" id="453921"/>
<dbReference type="KEGG" id="ptr:453921"/>
<dbReference type="CTD" id="5620"/>
<dbReference type="eggNOG" id="ENOG502TD5P">
    <property type="taxonomic scope" value="Eukaryota"/>
</dbReference>
<dbReference type="InParanoid" id="P35300"/>
<dbReference type="Proteomes" id="UP000002277">
    <property type="component" value="Unplaced"/>
</dbReference>
<dbReference type="GO" id="GO:0000786">
    <property type="term" value="C:nucleosome"/>
    <property type="evidence" value="ECO:0007669"/>
    <property type="project" value="UniProtKB-KW"/>
</dbReference>
<dbReference type="GO" id="GO:0005634">
    <property type="term" value="C:nucleus"/>
    <property type="evidence" value="ECO:0000318"/>
    <property type="project" value="GO_Central"/>
</dbReference>
<dbReference type="GO" id="GO:0003677">
    <property type="term" value="F:DNA binding"/>
    <property type="evidence" value="ECO:0007669"/>
    <property type="project" value="UniProtKB-KW"/>
</dbReference>
<dbReference type="GO" id="GO:0030261">
    <property type="term" value="P:chromosome condensation"/>
    <property type="evidence" value="ECO:0007669"/>
    <property type="project" value="UniProtKB-KW"/>
</dbReference>
<dbReference type="GO" id="GO:0006997">
    <property type="term" value="P:nucleus organization"/>
    <property type="evidence" value="ECO:0000318"/>
    <property type="project" value="GO_Central"/>
</dbReference>
<dbReference type="GO" id="GO:0007286">
    <property type="term" value="P:spermatid development"/>
    <property type="evidence" value="ECO:0000318"/>
    <property type="project" value="GO_Central"/>
</dbReference>
<dbReference type="GO" id="GO:0007283">
    <property type="term" value="P:spermatogenesis"/>
    <property type="evidence" value="ECO:0000250"/>
    <property type="project" value="UniProtKB"/>
</dbReference>
<dbReference type="InterPro" id="IPR000492">
    <property type="entry name" value="PRM2"/>
</dbReference>
<dbReference type="PANTHER" id="PTHR21341">
    <property type="entry name" value="PROTAMINE-2"/>
    <property type="match status" value="1"/>
</dbReference>
<dbReference type="PANTHER" id="PTHR21341:SF2">
    <property type="entry name" value="PROTAMINE-2"/>
    <property type="match status" value="1"/>
</dbReference>
<dbReference type="Pfam" id="PF00841">
    <property type="entry name" value="Protamine_P2"/>
    <property type="match status" value="1"/>
</dbReference>
<name>PRM2_PANTR</name>
<evidence type="ECO:0000250" key="1">
    <source>
        <dbReference type="UniProtKB" id="P07978"/>
    </source>
</evidence>
<evidence type="ECO:0000250" key="2">
    <source>
        <dbReference type="UniProtKB" id="P11248"/>
    </source>
</evidence>
<evidence type="ECO:0000256" key="3">
    <source>
        <dbReference type="SAM" id="MobiDB-lite"/>
    </source>
</evidence>
<evidence type="ECO:0000305" key="4"/>
<accession>P35300</accession>
<accession>Q71TU7</accession>
<protein>
    <recommendedName>
        <fullName>Protamine-2</fullName>
    </recommendedName>
    <alternativeName>
        <fullName>Sperm histone P2</fullName>
    </alternativeName>
    <alternativeName>
        <fullName>Sperm protamine P2</fullName>
    </alternativeName>
</protein>
<keyword id="KW-0158">Chromosome</keyword>
<keyword id="KW-0217">Developmental protein</keyword>
<keyword id="KW-0221">Differentiation</keyword>
<keyword id="KW-0226">DNA condensation</keyword>
<keyword id="KW-0238">DNA-binding</keyword>
<keyword id="KW-0544">Nucleosome core</keyword>
<keyword id="KW-0539">Nucleus</keyword>
<keyword id="KW-0597">Phosphoprotein</keyword>
<keyword id="KW-1185">Reference proteome</keyword>
<keyword id="KW-0744">Spermatogenesis</keyword>
<sequence length="102" mass="12976">MVRYRVRSPSEPSHEVYRQQLHGQEQGHHGQEEQGLSPEHVEVYERTHGHSHYRRRHCSRRRLRRIHRQQHRSCRRRKRRSCRHRRKHRRGCRTRRRTCRRH</sequence>
<organism>
    <name type="scientific">Pan troglodytes</name>
    <name type="common">Chimpanzee</name>
    <dbReference type="NCBI Taxonomy" id="9598"/>
    <lineage>
        <taxon>Eukaryota</taxon>
        <taxon>Metazoa</taxon>
        <taxon>Chordata</taxon>
        <taxon>Craniata</taxon>
        <taxon>Vertebrata</taxon>
        <taxon>Euteleostomi</taxon>
        <taxon>Mammalia</taxon>
        <taxon>Eutheria</taxon>
        <taxon>Euarchontoglires</taxon>
        <taxon>Primates</taxon>
        <taxon>Haplorrhini</taxon>
        <taxon>Catarrhini</taxon>
        <taxon>Hominidae</taxon>
        <taxon>Pan</taxon>
    </lineage>
</organism>
<comment type="function">
    <text evidence="1">Protamines substitute for histones in the chromatin of sperm during the haploid phase of spermatogenesis. They compact sperm DNA into a highly condensed, stable and inactive complex.</text>
</comment>
<comment type="subunit">
    <text evidence="1">Interacts with TDRP.</text>
</comment>
<comment type="subcellular location">
    <subcellularLocation>
        <location evidence="1">Nucleus</location>
    </subcellularLocation>
    <subcellularLocation>
        <location evidence="1">Chromosome</location>
    </subcellularLocation>
</comment>
<comment type="tissue specificity">
    <text>Testis.</text>
</comment>
<comment type="PTM">
    <text evidence="1">Proteolytic processing into mature chains is required for histone eviction during spermatogenesis. Transition proteins (TNP1 and TNP2) are required for processing.</text>
</comment>
<comment type="similarity">
    <text evidence="4">Belongs to the protamine P2 family.</text>
</comment>
<gene>
    <name type="primary">PRM2</name>
</gene>
<feature type="chain" id="PRO_0000191605" description="Protamine-2">
    <location>
        <begin position="1"/>
        <end position="102"/>
    </location>
</feature>
<feature type="region of interest" description="Disordered" evidence="3">
    <location>
        <begin position="1"/>
        <end position="40"/>
    </location>
</feature>
<feature type="region of interest" description="Disordered" evidence="3">
    <location>
        <begin position="67"/>
        <end position="102"/>
    </location>
</feature>
<feature type="modified residue" description="Phosphoserine" evidence="2">
    <location>
        <position position="8"/>
    </location>
</feature>
<feature type="modified residue" description="Phosphoserine" evidence="2">
    <location>
        <position position="10"/>
    </location>
</feature>
<feature type="modified residue" description="Phosphoserine" evidence="2">
    <location>
        <position position="37"/>
    </location>
</feature>
<proteinExistence type="evidence at transcript level"/>